<comment type="function">
    <text evidence="1">Probable lipolytic acyl hydrolase (LAH), an activity which is thought to be involved in the response of tubers to pathogens.</text>
</comment>
<comment type="subcellular location">
    <subcellularLocation>
        <location evidence="1">Vacuole</location>
    </subcellularLocation>
</comment>
<comment type="tissue specificity">
    <text evidence="4">Tuber.</text>
</comment>
<comment type="domain">
    <text>The nitrogen atoms of the two glycine residues in the GGXR motif define the oxyanion hole, and stabilize the oxyanion that forms during the nucleophilic attack by the catalytic serine during substrate cleavage.</text>
</comment>
<comment type="miscellaneous">
    <text>Patatin have a dual role as a somatic storage protein and as an enzyme involved in host resistance.</text>
</comment>
<comment type="similarity">
    <text evidence="5">Belongs to the patatin family.</text>
</comment>
<dbReference type="EC" id="3.1.1.-"/>
<dbReference type="EMBL" id="DQ114416">
    <property type="protein sequence ID" value="AAZ75957.1"/>
    <property type="molecule type" value="mRNA"/>
</dbReference>
<dbReference type="SMR" id="Q3YJT4"/>
<dbReference type="GlyCosmos" id="Q3YJT4">
    <property type="glycosylation" value="1 site, No reported glycans"/>
</dbReference>
<dbReference type="InParanoid" id="Q3YJT4"/>
<dbReference type="Proteomes" id="UP000011115">
    <property type="component" value="Unassembled WGS sequence"/>
</dbReference>
<dbReference type="ExpressionAtlas" id="Q3YJT4">
    <property type="expression patterns" value="baseline and differential"/>
</dbReference>
<dbReference type="GO" id="GO:0005773">
    <property type="term" value="C:vacuole"/>
    <property type="evidence" value="ECO:0007669"/>
    <property type="project" value="UniProtKB-SubCell"/>
</dbReference>
<dbReference type="GO" id="GO:0047372">
    <property type="term" value="F:monoacylglycerol lipase activity"/>
    <property type="evidence" value="ECO:0000318"/>
    <property type="project" value="GO_Central"/>
</dbReference>
<dbReference type="GO" id="GO:0045735">
    <property type="term" value="F:nutrient reservoir activity"/>
    <property type="evidence" value="ECO:0007669"/>
    <property type="project" value="UniProtKB-KW"/>
</dbReference>
<dbReference type="GO" id="GO:0004620">
    <property type="term" value="F:phospholipase activity"/>
    <property type="evidence" value="ECO:0000318"/>
    <property type="project" value="GO_Central"/>
</dbReference>
<dbReference type="GO" id="GO:0006952">
    <property type="term" value="P:defense response"/>
    <property type="evidence" value="ECO:0007669"/>
    <property type="project" value="UniProtKB-KW"/>
</dbReference>
<dbReference type="GO" id="GO:0016042">
    <property type="term" value="P:lipid catabolic process"/>
    <property type="evidence" value="ECO:0007669"/>
    <property type="project" value="UniProtKB-KW"/>
</dbReference>
<dbReference type="Gene3D" id="3.40.1090.10">
    <property type="entry name" value="Cytosolic phospholipase A2 catalytic domain"/>
    <property type="match status" value="1"/>
</dbReference>
<dbReference type="InterPro" id="IPR016035">
    <property type="entry name" value="Acyl_Trfase/lysoPLipase"/>
</dbReference>
<dbReference type="InterPro" id="IPR002641">
    <property type="entry name" value="PNPLA_dom"/>
</dbReference>
<dbReference type="PANTHER" id="PTHR32176:SF85">
    <property type="entry name" value="PATATIN GROUP D-2"/>
    <property type="match status" value="1"/>
</dbReference>
<dbReference type="PANTHER" id="PTHR32176">
    <property type="entry name" value="XYLOSE ISOMERASE"/>
    <property type="match status" value="1"/>
</dbReference>
<dbReference type="Pfam" id="PF01734">
    <property type="entry name" value="Patatin"/>
    <property type="match status" value="1"/>
</dbReference>
<dbReference type="SUPFAM" id="SSF52151">
    <property type="entry name" value="FabD/lysophospholipase-like"/>
    <property type="match status" value="1"/>
</dbReference>
<dbReference type="PROSITE" id="PS51635">
    <property type="entry name" value="PNPLA"/>
    <property type="match status" value="1"/>
</dbReference>
<feature type="signal peptide" evidence="2">
    <location>
        <begin position="1"/>
        <end position="11"/>
    </location>
</feature>
<feature type="chain" id="PRO_0000296709" description="Patatin-1-Kuras 2">
    <location>
        <begin position="12"/>
        <end position="375"/>
    </location>
</feature>
<feature type="domain" description="PNPLA" evidence="3">
    <location>
        <begin position="20"/>
        <end position="218"/>
    </location>
</feature>
<feature type="coiled-coil region" evidence="2">
    <location>
        <begin position="349"/>
        <end position="373"/>
    </location>
</feature>
<feature type="short sequence motif" description="GXGXXG" evidence="3">
    <location>
        <begin position="24"/>
        <end position="29"/>
    </location>
</feature>
<feature type="short sequence motif" description="GXSXG" evidence="3">
    <location>
        <begin position="63"/>
        <end position="67"/>
    </location>
</feature>
<feature type="short sequence motif" description="DGA/G" evidence="3">
    <location>
        <begin position="204"/>
        <end position="206"/>
    </location>
</feature>
<feature type="active site" description="Nucleophile" evidence="3">
    <location>
        <position position="65"/>
    </location>
</feature>
<feature type="active site" description="Proton acceptor" evidence="3">
    <location>
        <position position="204"/>
    </location>
</feature>
<feature type="glycosylation site" description="N-linked (GlcNAc...) asparagine" evidence="2">
    <location>
        <position position="103"/>
    </location>
</feature>
<evidence type="ECO:0000250" key="1"/>
<evidence type="ECO:0000255" key="2"/>
<evidence type="ECO:0000255" key="3">
    <source>
        <dbReference type="PROSITE-ProRule" id="PRU01161"/>
    </source>
</evidence>
<evidence type="ECO:0000269" key="4">
    <source>
    </source>
</evidence>
<evidence type="ECO:0000305" key="5"/>
<protein>
    <recommendedName>
        <fullName>Patatin-1-Kuras 2</fullName>
        <ecNumber>3.1.1.-</ecNumber>
    </recommendedName>
</protein>
<gene>
    <name type="primary">pat1-k2</name>
</gene>
<proteinExistence type="evidence at protein level"/>
<accession>Q3YJT4</accession>
<sequence>MILATTSSTFASLEEMVTVLSIDGGGIKGIIPGTILEFLEGQLQKMDNNADARLADYFDVIGGTSTGGLLTAMITTPNENNRPFAAANEIVPFYFEHGPHIFNSSTGQFFGPKYDGKYLMQVLQEKLGETRVHQALTEVAISSFDIKTNKPVIFTKSNLAKSPELDAKMYDICYSTAAAPTYFPPHYFATNTINGDKYKFNLVDGAVATVADPALLSVSVATRRAQEDPAFASIRSLNYKKMLLLSLGTGTTSEFDKTHTAEETAKWGALQWMLVIQQMTEAASSYMTDYYLSTVFQDLHSQNNYLRVQENALTGTTTKADDASEANMELLAQVGENLLKKPVSKDNPETYEEALKRFAKLLSDRKKLRANKASY</sequence>
<name>PT1K2_SOLTU</name>
<keyword id="KW-0175">Coiled coil</keyword>
<keyword id="KW-0903">Direct protein sequencing</keyword>
<keyword id="KW-0325">Glycoprotein</keyword>
<keyword id="KW-0378">Hydrolase</keyword>
<keyword id="KW-0442">Lipid degradation</keyword>
<keyword id="KW-0443">Lipid metabolism</keyword>
<keyword id="KW-0611">Plant defense</keyword>
<keyword id="KW-1185">Reference proteome</keyword>
<keyword id="KW-0732">Signal</keyword>
<keyword id="KW-0758">Storage protein</keyword>
<keyword id="KW-0926">Vacuole</keyword>
<organism>
    <name type="scientific">Solanum tuberosum</name>
    <name type="common">Potato</name>
    <dbReference type="NCBI Taxonomy" id="4113"/>
    <lineage>
        <taxon>Eukaryota</taxon>
        <taxon>Viridiplantae</taxon>
        <taxon>Streptophyta</taxon>
        <taxon>Embryophyta</taxon>
        <taxon>Tracheophyta</taxon>
        <taxon>Spermatophyta</taxon>
        <taxon>Magnoliopsida</taxon>
        <taxon>eudicotyledons</taxon>
        <taxon>Gunneridae</taxon>
        <taxon>Pentapetalae</taxon>
        <taxon>asterids</taxon>
        <taxon>lamiids</taxon>
        <taxon>Solanales</taxon>
        <taxon>Solanaceae</taxon>
        <taxon>Solanoideae</taxon>
        <taxon>Solaneae</taxon>
        <taxon>Solanum</taxon>
    </lineage>
</organism>
<reference key="1">
    <citation type="journal article" date="2006" name="FEBS J.">
        <title>Patatins, Kunitz protease inhibitors and other major proteins in tuber of potato cv. Kuras.</title>
        <authorList>
            <person name="Bauw G."/>
            <person name="Nielsen H.V."/>
            <person name="Emmersen J."/>
            <person name="Nielsen K.L."/>
            <person name="Joergensen M."/>
            <person name="Welinder K.G."/>
        </authorList>
    </citation>
    <scope>NUCLEOTIDE SEQUENCE [MRNA]</scope>
    <scope>PROTEIN SEQUENCE OF 118-126; 132-156; 224-235; 320-340 AND 346-357</scope>
    <scope>TISSUE SPECIFICITY</scope>
    <scope>IDENTIFICATION BY MASS SPECTROMETRY</scope>
    <source>
        <strain>cv. Kuras</strain>
        <tissue>Tuber</tissue>
    </source>
</reference>